<sequence>MAGRPEKCFSLIRFTLLCLKMVISSKTAPEIPTIDQAYSKISNSITVEWTTVPGATSYLLTAEDGNTIIETTVANSPGTVTGLKAATLYQITIRSISASGQSQASSPKQAKTVLAAPVLEVSSPSPDSILVSWDAVYMAIGFSVSVMRANGLGRIWKENTTNTSLTFSSLDAGTLYTIKAYAWNANGIPGDDSTRNQRTSPRAPANIQVFFDSGALKASVSWTPTEGAFNYTVVASSDSSQRSCSTTLSSCSISSLQCGTEYLISVSANNDAGSSKSCSAPTLKTVACAPGRVMIQEEPPGHLSVAWSNVELGDYYVAFVKSDDGLEVHCNTSLTQCNFLSECGFTYFISVFAYNKAGQSPLGDVFNYTTAPCCPNDISPVLVSSDRVEIAWSPVRGAELYETKAIAGYSIVECNDTAPACTLSALDCDTKYNVTVYSFSEVRGSNLSCSSHFITTAPCSPEIKNISKDAFSMINVHWRSTNEGATYTVTAQGKKGLFQCSSTGETCRMGGLPCGSMFSVTAVAETQAGKSLPSYSVPLETVPCCPAGLTAAQVTQSIINVSWTAGAVAQTYAAVLESYIGQSKCHTHQNHCLLGCITCGINYTVALKAISSTGLTADCAYQSYSSSVCCPLGVKLYRLGPNGIRIYWRASRGAANYSTDLYGSKGIFTCAPHAGLSFCDITNIPCGDVYTVMVSPVAETGLKLTFCPKKIYSVTCSGSTLGMVIYRGKRNDTASPR</sequence>
<organism>
    <name type="scientific">Mus musculus</name>
    <name type="common">Mouse</name>
    <dbReference type="NCBI Taxonomy" id="10090"/>
    <lineage>
        <taxon>Eukaryota</taxon>
        <taxon>Metazoa</taxon>
        <taxon>Chordata</taxon>
        <taxon>Craniata</taxon>
        <taxon>Vertebrata</taxon>
        <taxon>Euteleostomi</taxon>
        <taxon>Mammalia</taxon>
        <taxon>Eutheria</taxon>
        <taxon>Euarchontoglires</taxon>
        <taxon>Glires</taxon>
        <taxon>Rodentia</taxon>
        <taxon>Myomorpha</taxon>
        <taxon>Muroidea</taxon>
        <taxon>Muridae</taxon>
        <taxon>Murinae</taxon>
        <taxon>Mus</taxon>
        <taxon>Mus</taxon>
    </lineage>
</organism>
<comment type="subcellular location">
    <subcellularLocation>
        <location evidence="5">Secreted</location>
    </subcellularLocation>
</comment>
<comment type="alternative products">
    <event type="alternative splicing"/>
    <isoform>
        <id>A2AED3-1</id>
        <name>1</name>
        <sequence type="displayed"/>
    </isoform>
    <isoform>
        <id>A2AED3-3</id>
        <name>2</name>
        <sequence type="described" ref="VSP_024610 VSP_024612 VSP_024613"/>
    </isoform>
    <isoform>
        <id>A2AED3-4</id>
        <name>3</name>
        <sequence type="described" ref="VSP_024611"/>
    </isoform>
</comment>
<comment type="sequence caution" evidence="5">
    <conflict type="frameshift">
        <sequence resource="EMBL" id="BC113188"/>
    </conflict>
</comment>
<comment type="sequence caution" evidence="5">
    <conflict type="erroneous gene model prediction">
        <sequence resource="EMBL-CDS" id="CAM20604"/>
    </conflict>
</comment>
<comment type="sequence caution" evidence="5">
    <conflict type="erroneous gene model prediction">
        <sequence resource="EMBL-CDS" id="CAM20605"/>
    </conflict>
</comment>
<gene>
    <name type="primary">Fndc7</name>
</gene>
<evidence type="ECO:0000255" key="1"/>
<evidence type="ECO:0000255" key="2">
    <source>
        <dbReference type="PROSITE-ProRule" id="PRU00316"/>
    </source>
</evidence>
<evidence type="ECO:0000303" key="3">
    <source>
    </source>
</evidence>
<evidence type="ECO:0000303" key="4">
    <source>
    </source>
</evidence>
<evidence type="ECO:0000305" key="5"/>
<keyword id="KW-0025">Alternative splicing</keyword>
<keyword id="KW-0325">Glycoprotein</keyword>
<keyword id="KW-1185">Reference proteome</keyword>
<keyword id="KW-0677">Repeat</keyword>
<keyword id="KW-0964">Secreted</keyword>
<keyword id="KW-0732">Signal</keyword>
<proteinExistence type="evidence at transcript level"/>
<name>FNDC7_MOUSE</name>
<protein>
    <recommendedName>
        <fullName>Fibronectin type III domain-containing protein 7</fullName>
    </recommendedName>
</protein>
<reference key="1">
    <citation type="journal article" date="2005" name="Science">
        <title>The transcriptional landscape of the mammalian genome.</title>
        <authorList>
            <person name="Carninci P."/>
            <person name="Kasukawa T."/>
            <person name="Katayama S."/>
            <person name="Gough J."/>
            <person name="Frith M.C."/>
            <person name="Maeda N."/>
            <person name="Oyama R."/>
            <person name="Ravasi T."/>
            <person name="Lenhard B."/>
            <person name="Wells C."/>
            <person name="Kodzius R."/>
            <person name="Shimokawa K."/>
            <person name="Bajic V.B."/>
            <person name="Brenner S.E."/>
            <person name="Batalov S."/>
            <person name="Forrest A.R."/>
            <person name="Zavolan M."/>
            <person name="Davis M.J."/>
            <person name="Wilming L.G."/>
            <person name="Aidinis V."/>
            <person name="Allen J.E."/>
            <person name="Ambesi-Impiombato A."/>
            <person name="Apweiler R."/>
            <person name="Aturaliya R.N."/>
            <person name="Bailey T.L."/>
            <person name="Bansal M."/>
            <person name="Baxter L."/>
            <person name="Beisel K.W."/>
            <person name="Bersano T."/>
            <person name="Bono H."/>
            <person name="Chalk A.M."/>
            <person name="Chiu K.P."/>
            <person name="Choudhary V."/>
            <person name="Christoffels A."/>
            <person name="Clutterbuck D.R."/>
            <person name="Crowe M.L."/>
            <person name="Dalla E."/>
            <person name="Dalrymple B.P."/>
            <person name="de Bono B."/>
            <person name="Della Gatta G."/>
            <person name="di Bernardo D."/>
            <person name="Down T."/>
            <person name="Engstrom P."/>
            <person name="Fagiolini M."/>
            <person name="Faulkner G."/>
            <person name="Fletcher C.F."/>
            <person name="Fukushima T."/>
            <person name="Furuno M."/>
            <person name="Futaki S."/>
            <person name="Gariboldi M."/>
            <person name="Georgii-Hemming P."/>
            <person name="Gingeras T.R."/>
            <person name="Gojobori T."/>
            <person name="Green R.E."/>
            <person name="Gustincich S."/>
            <person name="Harbers M."/>
            <person name="Hayashi Y."/>
            <person name="Hensch T.K."/>
            <person name="Hirokawa N."/>
            <person name="Hill D."/>
            <person name="Huminiecki L."/>
            <person name="Iacono M."/>
            <person name="Ikeo K."/>
            <person name="Iwama A."/>
            <person name="Ishikawa T."/>
            <person name="Jakt M."/>
            <person name="Kanapin A."/>
            <person name="Katoh M."/>
            <person name="Kawasawa Y."/>
            <person name="Kelso J."/>
            <person name="Kitamura H."/>
            <person name="Kitano H."/>
            <person name="Kollias G."/>
            <person name="Krishnan S.P."/>
            <person name="Kruger A."/>
            <person name="Kummerfeld S.K."/>
            <person name="Kurochkin I.V."/>
            <person name="Lareau L.F."/>
            <person name="Lazarevic D."/>
            <person name="Lipovich L."/>
            <person name="Liu J."/>
            <person name="Liuni S."/>
            <person name="McWilliam S."/>
            <person name="Madan Babu M."/>
            <person name="Madera M."/>
            <person name="Marchionni L."/>
            <person name="Matsuda H."/>
            <person name="Matsuzawa S."/>
            <person name="Miki H."/>
            <person name="Mignone F."/>
            <person name="Miyake S."/>
            <person name="Morris K."/>
            <person name="Mottagui-Tabar S."/>
            <person name="Mulder N."/>
            <person name="Nakano N."/>
            <person name="Nakauchi H."/>
            <person name="Ng P."/>
            <person name="Nilsson R."/>
            <person name="Nishiguchi S."/>
            <person name="Nishikawa S."/>
            <person name="Nori F."/>
            <person name="Ohara O."/>
            <person name="Okazaki Y."/>
            <person name="Orlando V."/>
            <person name="Pang K.C."/>
            <person name="Pavan W.J."/>
            <person name="Pavesi G."/>
            <person name="Pesole G."/>
            <person name="Petrovsky N."/>
            <person name="Piazza S."/>
            <person name="Reed J."/>
            <person name="Reid J.F."/>
            <person name="Ring B.Z."/>
            <person name="Ringwald M."/>
            <person name="Rost B."/>
            <person name="Ruan Y."/>
            <person name="Salzberg S.L."/>
            <person name="Sandelin A."/>
            <person name="Schneider C."/>
            <person name="Schoenbach C."/>
            <person name="Sekiguchi K."/>
            <person name="Semple C.A."/>
            <person name="Seno S."/>
            <person name="Sessa L."/>
            <person name="Sheng Y."/>
            <person name="Shibata Y."/>
            <person name="Shimada H."/>
            <person name="Shimada K."/>
            <person name="Silva D."/>
            <person name="Sinclair B."/>
            <person name="Sperling S."/>
            <person name="Stupka E."/>
            <person name="Sugiura K."/>
            <person name="Sultana R."/>
            <person name="Takenaka Y."/>
            <person name="Taki K."/>
            <person name="Tammoja K."/>
            <person name="Tan S.L."/>
            <person name="Tang S."/>
            <person name="Taylor M.S."/>
            <person name="Tegner J."/>
            <person name="Teichmann S.A."/>
            <person name="Ueda H.R."/>
            <person name="van Nimwegen E."/>
            <person name="Verardo R."/>
            <person name="Wei C.L."/>
            <person name="Yagi K."/>
            <person name="Yamanishi H."/>
            <person name="Zabarovsky E."/>
            <person name="Zhu S."/>
            <person name="Zimmer A."/>
            <person name="Hide W."/>
            <person name="Bult C."/>
            <person name="Grimmond S.M."/>
            <person name="Teasdale R.D."/>
            <person name="Liu E.T."/>
            <person name="Brusic V."/>
            <person name="Quackenbush J."/>
            <person name="Wahlestedt C."/>
            <person name="Mattick J.S."/>
            <person name="Hume D.A."/>
            <person name="Kai C."/>
            <person name="Sasaki D."/>
            <person name="Tomaru Y."/>
            <person name="Fukuda S."/>
            <person name="Kanamori-Katayama M."/>
            <person name="Suzuki M."/>
            <person name="Aoki J."/>
            <person name="Arakawa T."/>
            <person name="Iida J."/>
            <person name="Imamura K."/>
            <person name="Itoh M."/>
            <person name="Kato T."/>
            <person name="Kawaji H."/>
            <person name="Kawagashira N."/>
            <person name="Kawashima T."/>
            <person name="Kojima M."/>
            <person name="Kondo S."/>
            <person name="Konno H."/>
            <person name="Nakano K."/>
            <person name="Ninomiya N."/>
            <person name="Nishio T."/>
            <person name="Okada M."/>
            <person name="Plessy C."/>
            <person name="Shibata K."/>
            <person name="Shiraki T."/>
            <person name="Suzuki S."/>
            <person name="Tagami M."/>
            <person name="Waki K."/>
            <person name="Watahiki A."/>
            <person name="Okamura-Oho Y."/>
            <person name="Suzuki H."/>
            <person name="Kawai J."/>
            <person name="Hayashizaki Y."/>
        </authorList>
    </citation>
    <scope>NUCLEOTIDE SEQUENCE [LARGE SCALE MRNA] (ISOFORMS 1 AND 2)</scope>
    <source>
        <strain>C57BL/6J</strain>
        <tissue>Oviduct</tissue>
    </source>
</reference>
<reference key="2">
    <citation type="journal article" date="2009" name="PLoS Biol.">
        <title>Lineage-specific biology revealed by a finished genome assembly of the mouse.</title>
        <authorList>
            <person name="Church D.M."/>
            <person name="Goodstadt L."/>
            <person name="Hillier L.W."/>
            <person name="Zody M.C."/>
            <person name="Goldstein S."/>
            <person name="She X."/>
            <person name="Bult C.J."/>
            <person name="Agarwala R."/>
            <person name="Cherry J.L."/>
            <person name="DiCuccio M."/>
            <person name="Hlavina W."/>
            <person name="Kapustin Y."/>
            <person name="Meric P."/>
            <person name="Maglott D."/>
            <person name="Birtle Z."/>
            <person name="Marques A.C."/>
            <person name="Graves T."/>
            <person name="Zhou S."/>
            <person name="Teague B."/>
            <person name="Potamousis K."/>
            <person name="Churas C."/>
            <person name="Place M."/>
            <person name="Herschleb J."/>
            <person name="Runnheim R."/>
            <person name="Forrest D."/>
            <person name="Amos-Landgraf J."/>
            <person name="Schwartz D.C."/>
            <person name="Cheng Z."/>
            <person name="Lindblad-Toh K."/>
            <person name="Eichler E.E."/>
            <person name="Ponting C.P."/>
        </authorList>
    </citation>
    <scope>NUCLEOTIDE SEQUENCE [LARGE SCALE GENOMIC DNA]</scope>
    <source>
        <strain>C57BL/6J</strain>
    </source>
</reference>
<reference key="3">
    <citation type="journal article" date="2004" name="Genome Res.">
        <title>The status, quality, and expansion of the NIH full-length cDNA project: the Mammalian Gene Collection (MGC).</title>
        <authorList>
            <consortium name="The MGC Project Team"/>
        </authorList>
    </citation>
    <scope>NUCLEOTIDE SEQUENCE [LARGE SCALE MRNA] (ISOFORMS 1 AND 3)</scope>
</reference>
<feature type="signal peptide" evidence="1">
    <location>
        <begin position="1"/>
        <end position="25"/>
    </location>
</feature>
<feature type="chain" id="PRO_0000284678" description="Fibronectin type III domain-containing protein 7">
    <location>
        <begin position="26"/>
        <end position="737"/>
    </location>
</feature>
<feature type="domain" description="Fibronectin type-III 1" evidence="2">
    <location>
        <begin position="28"/>
        <end position="115"/>
    </location>
</feature>
<feature type="domain" description="Fibronectin type-III 2" evidence="2">
    <location>
        <begin position="116"/>
        <end position="203"/>
    </location>
</feature>
<feature type="domain" description="Fibronectin type-III 3" evidence="2">
    <location>
        <begin position="204"/>
        <end position="288"/>
    </location>
</feature>
<feature type="domain" description="Fibronectin type-III 4" evidence="2">
    <location>
        <begin position="289"/>
        <end position="373"/>
    </location>
</feature>
<feature type="domain" description="Fibronectin type-III 5" evidence="2">
    <location>
        <begin position="374"/>
        <end position="459"/>
    </location>
</feature>
<feature type="domain" description="Fibronectin type-III 6" evidence="2">
    <location>
        <begin position="460"/>
        <end position="544"/>
    </location>
</feature>
<feature type="domain" description="Fibronectin type-III 7" evidence="2">
    <location>
        <begin position="545"/>
        <end position="633"/>
    </location>
</feature>
<feature type="domain" description="Fibronectin type-III 8" evidence="2">
    <location>
        <begin position="631"/>
        <end position="715"/>
    </location>
</feature>
<feature type="glycosylation site" description="N-linked (GlcNAc...) asparagine" evidence="1">
    <location>
        <position position="230"/>
    </location>
</feature>
<feature type="glycosylation site" description="N-linked (GlcNAc...) asparagine" evidence="1">
    <location>
        <position position="433"/>
    </location>
</feature>
<feature type="splice variant" id="VSP_024610" description="In isoform 2." evidence="4">
    <location>
        <begin position="1"/>
        <end position="137"/>
    </location>
</feature>
<feature type="splice variant" id="VSP_024611" description="In isoform 3." evidence="3">
    <original>SPRAPANIQVFFDSGALKASVSWTPTEGAFNYTVVASSDSSQRSCSTTLSSCSISSLQCGTEYLISVSANNDAGSSKSCSAPTLKTV</original>
    <variation>I</variation>
    <location>
        <begin position="200"/>
        <end position="286"/>
    </location>
</feature>
<feature type="splice variant" id="VSP_024612" description="In isoform 2." evidence="4">
    <original>APCSP</original>
    <variation>GMVLL</variation>
    <location>
        <begin position="457"/>
        <end position="461"/>
    </location>
</feature>
<feature type="splice variant" id="VSP_024613" description="In isoform 2." evidence="4">
    <location>
        <begin position="462"/>
        <end position="737"/>
    </location>
</feature>
<feature type="sequence conflict" description="In Ref. 3; BC113188." evidence="5" ref="3">
    <original>A</original>
    <variation>G</variation>
    <location>
        <position position="28"/>
    </location>
</feature>
<feature type="sequence conflict" description="In Ref. 1; BAC35609." evidence="5" ref="1">
    <original>S</original>
    <variation>T</variation>
    <location>
        <position position="254"/>
    </location>
</feature>
<feature type="sequence conflict" description="In Ref. 3; BC113188." evidence="5" ref="3">
    <original>S</original>
    <variation>F</variation>
    <location>
        <position position="304"/>
    </location>
</feature>
<feature type="sequence conflict" description="In Ref. 3; BC113188." evidence="5" ref="3">
    <original>V</original>
    <variation>I</variation>
    <location>
        <position position="434"/>
    </location>
</feature>
<dbReference type="EMBL" id="AK053989">
    <property type="protein sequence ID" value="BAC35609.1"/>
    <property type="molecule type" value="mRNA"/>
</dbReference>
<dbReference type="EMBL" id="AK054241">
    <property type="protein sequence ID" value="BAC35702.2"/>
    <property type="molecule type" value="mRNA"/>
</dbReference>
<dbReference type="EMBL" id="AK165075">
    <property type="protein sequence ID" value="BAE38027.1"/>
    <property type="molecule type" value="mRNA"/>
</dbReference>
<dbReference type="EMBL" id="AL671894">
    <property type="protein sequence ID" value="CAM20604.1"/>
    <property type="status" value="ALT_SEQ"/>
    <property type="molecule type" value="Genomic_DNA"/>
</dbReference>
<dbReference type="EMBL" id="AL671894">
    <property type="protein sequence ID" value="CAM20605.1"/>
    <property type="status" value="ALT_SEQ"/>
    <property type="molecule type" value="Genomic_DNA"/>
</dbReference>
<dbReference type="EMBL" id="AL671894">
    <property type="protein sequence ID" value="CAM20606.1"/>
    <property type="molecule type" value="Genomic_DNA"/>
</dbReference>
<dbReference type="EMBL" id="BC111898">
    <property type="protein sequence ID" value="AAI11899.1"/>
    <property type="molecule type" value="mRNA"/>
</dbReference>
<dbReference type="EMBL" id="BC113188">
    <property type="status" value="NOT_ANNOTATED_CDS"/>
    <property type="molecule type" value="mRNA"/>
</dbReference>
<dbReference type="CCDS" id="CCDS17769.1">
    <molecule id="A2AED3-1"/>
</dbReference>
<dbReference type="CCDS" id="CCDS51050.1">
    <molecule id="A2AED3-4"/>
</dbReference>
<dbReference type="RefSeq" id="NP_001159437.1">
    <molecule id="A2AED3-4"/>
    <property type="nucleotide sequence ID" value="NM_001165965.1"/>
</dbReference>
<dbReference type="RefSeq" id="NP_796065.2">
    <molecule id="A2AED3-1"/>
    <property type="nucleotide sequence ID" value="NM_177091.5"/>
</dbReference>
<dbReference type="SMR" id="A2AED3"/>
<dbReference type="FunCoup" id="A2AED3">
    <property type="interactions" value="1"/>
</dbReference>
<dbReference type="STRING" id="10090.ENSMUSP00000099680"/>
<dbReference type="GlyCosmos" id="A2AED3">
    <property type="glycosylation" value="2 sites, No reported glycans"/>
</dbReference>
<dbReference type="GlyGen" id="A2AED3">
    <property type="glycosylation" value="2 sites"/>
</dbReference>
<dbReference type="iPTMnet" id="A2AED3"/>
<dbReference type="PhosphoSitePlus" id="A2AED3"/>
<dbReference type="PaxDb" id="10090-ENSMUSP00000099680"/>
<dbReference type="ProteomicsDB" id="271779">
    <molecule id="A2AED3-1"/>
</dbReference>
<dbReference type="ProteomicsDB" id="271780">
    <molecule id="A2AED3-3"/>
</dbReference>
<dbReference type="ProteomicsDB" id="271781">
    <molecule id="A2AED3-4"/>
</dbReference>
<dbReference type="Antibodypedia" id="33735">
    <property type="antibodies" value="110 antibodies from 18 providers"/>
</dbReference>
<dbReference type="Ensembl" id="ENSMUST00000053065.8">
    <molecule id="A2AED3-4"/>
    <property type="protein sequence ID" value="ENSMUSP00000051172.5"/>
    <property type="gene ID" value="ENSMUSG00000045326.14"/>
</dbReference>
<dbReference type="Ensembl" id="ENSMUST00000102620.10">
    <molecule id="A2AED3-1"/>
    <property type="protein sequence ID" value="ENSMUSP00000099680.4"/>
    <property type="gene ID" value="ENSMUSG00000045326.14"/>
</dbReference>
<dbReference type="GeneID" id="320181"/>
<dbReference type="KEGG" id="mmu:320181"/>
<dbReference type="UCSC" id="uc008qzv.2">
    <molecule id="A2AED3-1"/>
    <property type="organism name" value="mouse"/>
</dbReference>
<dbReference type="UCSC" id="uc008qzw.1">
    <molecule id="A2AED3-3"/>
    <property type="organism name" value="mouse"/>
</dbReference>
<dbReference type="UCSC" id="uc012cwg.1">
    <molecule id="A2AED3-4"/>
    <property type="organism name" value="mouse"/>
</dbReference>
<dbReference type="AGR" id="MGI:2443535"/>
<dbReference type="CTD" id="163479"/>
<dbReference type="MGI" id="MGI:2443535">
    <property type="gene designation" value="Fndc7"/>
</dbReference>
<dbReference type="VEuPathDB" id="HostDB:ENSMUSG00000045326"/>
<dbReference type="eggNOG" id="ENOG502QTU0">
    <property type="taxonomic scope" value="Eukaryota"/>
</dbReference>
<dbReference type="GeneTree" id="ENSGT00390000004674"/>
<dbReference type="HOGENOM" id="CLU_024430_0_0_1"/>
<dbReference type="InParanoid" id="A2AED3"/>
<dbReference type="OMA" id="GFNVVEC"/>
<dbReference type="PhylomeDB" id="A2AED3"/>
<dbReference type="TreeFam" id="TF331331"/>
<dbReference type="BioGRID-ORCS" id="320181">
    <property type="hits" value="3 hits in 79 CRISPR screens"/>
</dbReference>
<dbReference type="ChiTaRS" id="Fndc7">
    <property type="organism name" value="mouse"/>
</dbReference>
<dbReference type="PRO" id="PR:A2AED3"/>
<dbReference type="Proteomes" id="UP000000589">
    <property type="component" value="Chromosome 3"/>
</dbReference>
<dbReference type="RNAct" id="A2AED3">
    <property type="molecule type" value="protein"/>
</dbReference>
<dbReference type="Bgee" id="ENSMUSG00000045326">
    <property type="expression patterns" value="Expressed in vestibular epithelium and 28 other cell types or tissues"/>
</dbReference>
<dbReference type="ExpressionAtlas" id="A2AED3">
    <property type="expression patterns" value="baseline and differential"/>
</dbReference>
<dbReference type="GO" id="GO:0005576">
    <property type="term" value="C:extracellular region"/>
    <property type="evidence" value="ECO:0007669"/>
    <property type="project" value="UniProtKB-SubCell"/>
</dbReference>
<dbReference type="CDD" id="cd00063">
    <property type="entry name" value="FN3"/>
    <property type="match status" value="3"/>
</dbReference>
<dbReference type="Gene3D" id="2.60.40.10">
    <property type="entry name" value="Immunoglobulins"/>
    <property type="match status" value="4"/>
</dbReference>
<dbReference type="InterPro" id="IPR003961">
    <property type="entry name" value="FN3_dom"/>
</dbReference>
<dbReference type="InterPro" id="IPR036116">
    <property type="entry name" value="FN3_sf"/>
</dbReference>
<dbReference type="InterPro" id="IPR013783">
    <property type="entry name" value="Ig-like_fold"/>
</dbReference>
<dbReference type="PANTHER" id="PTHR47135">
    <property type="entry name" value="FIBRONECTIN TYPE III DOMAIN-CONTAINING PROTEIN 7"/>
    <property type="match status" value="1"/>
</dbReference>
<dbReference type="PANTHER" id="PTHR47135:SF1">
    <property type="entry name" value="FIBRONECTIN TYPE III DOMAIN-CONTAINING PROTEIN 7"/>
    <property type="match status" value="1"/>
</dbReference>
<dbReference type="Pfam" id="PF00041">
    <property type="entry name" value="fn3"/>
    <property type="match status" value="2"/>
</dbReference>
<dbReference type="SMART" id="SM00060">
    <property type="entry name" value="FN3"/>
    <property type="match status" value="6"/>
</dbReference>
<dbReference type="SUPFAM" id="SSF49265">
    <property type="entry name" value="Fibronectin type III"/>
    <property type="match status" value="4"/>
</dbReference>
<dbReference type="PROSITE" id="PS50853">
    <property type="entry name" value="FN3"/>
    <property type="match status" value="7"/>
</dbReference>
<accession>A2AED3</accession>
<accession>A2AED1</accession>
<accession>A2AED2</accession>
<accession>Q14DI4</accession>
<accession>Q14DS1</accession>
<accession>Q3TNR1</accession>
<accession>Q8BW61</accession>
<accession>Q8BW83</accession>